<proteinExistence type="inferred from homology"/>
<organism>
    <name type="scientific">Yersinia pseudotuberculosis serotype IB (strain PB1/+)</name>
    <dbReference type="NCBI Taxonomy" id="502801"/>
    <lineage>
        <taxon>Bacteria</taxon>
        <taxon>Pseudomonadati</taxon>
        <taxon>Pseudomonadota</taxon>
        <taxon>Gammaproteobacteria</taxon>
        <taxon>Enterobacterales</taxon>
        <taxon>Yersiniaceae</taxon>
        <taxon>Yersinia</taxon>
    </lineage>
</organism>
<reference key="1">
    <citation type="submission" date="2008-04" db="EMBL/GenBank/DDBJ databases">
        <title>Complete sequence of Yersinia pseudotuberculosis PB1/+.</title>
        <authorList>
            <person name="Copeland A."/>
            <person name="Lucas S."/>
            <person name="Lapidus A."/>
            <person name="Glavina del Rio T."/>
            <person name="Dalin E."/>
            <person name="Tice H."/>
            <person name="Bruce D."/>
            <person name="Goodwin L."/>
            <person name="Pitluck S."/>
            <person name="Munk A.C."/>
            <person name="Brettin T."/>
            <person name="Detter J.C."/>
            <person name="Han C."/>
            <person name="Tapia R."/>
            <person name="Schmutz J."/>
            <person name="Larimer F."/>
            <person name="Land M."/>
            <person name="Hauser L."/>
            <person name="Challacombe J.F."/>
            <person name="Green L."/>
            <person name="Lindler L.E."/>
            <person name="Nikolich M.P."/>
            <person name="Richardson P."/>
        </authorList>
    </citation>
    <scope>NUCLEOTIDE SEQUENCE [LARGE SCALE GENOMIC DNA]</scope>
    <source>
        <strain>PB1/+</strain>
    </source>
</reference>
<evidence type="ECO:0000255" key="1"/>
<evidence type="ECO:0000255" key="2">
    <source>
        <dbReference type="HAMAP-Rule" id="MF_00684"/>
    </source>
</evidence>
<comment type="function">
    <text evidence="2">Catalyzes the hydrolysis of N(4)-acetylcytidine (ac4C).</text>
</comment>
<comment type="catalytic activity">
    <reaction evidence="2">
        <text>N(4)-acetylcytidine + H2O = cytidine + acetate + H(+)</text>
        <dbReference type="Rhea" id="RHEA:62932"/>
        <dbReference type="ChEBI" id="CHEBI:15377"/>
        <dbReference type="ChEBI" id="CHEBI:15378"/>
        <dbReference type="ChEBI" id="CHEBI:17562"/>
        <dbReference type="ChEBI" id="CHEBI:30089"/>
        <dbReference type="ChEBI" id="CHEBI:70989"/>
        <dbReference type="EC" id="3.5.1.135"/>
    </reaction>
</comment>
<comment type="catalytic activity">
    <reaction evidence="2">
        <text>N(4)-acetyl-2'-deoxycytidine + H2O = 2'-deoxycytidine + acetate + H(+)</text>
        <dbReference type="Rhea" id="RHEA:62936"/>
        <dbReference type="ChEBI" id="CHEBI:15377"/>
        <dbReference type="ChEBI" id="CHEBI:15378"/>
        <dbReference type="ChEBI" id="CHEBI:15698"/>
        <dbReference type="ChEBI" id="CHEBI:30089"/>
        <dbReference type="ChEBI" id="CHEBI:146133"/>
        <dbReference type="EC" id="3.5.1.135"/>
    </reaction>
</comment>
<comment type="catalytic activity">
    <reaction evidence="2">
        <text>N(4)-acetylcytosine + H2O = cytosine + acetate + H(+)</text>
        <dbReference type="Rhea" id="RHEA:62940"/>
        <dbReference type="ChEBI" id="CHEBI:15377"/>
        <dbReference type="ChEBI" id="CHEBI:15378"/>
        <dbReference type="ChEBI" id="CHEBI:16040"/>
        <dbReference type="ChEBI" id="CHEBI:30089"/>
        <dbReference type="ChEBI" id="CHEBI:146134"/>
        <dbReference type="EC" id="3.5.1.135"/>
    </reaction>
</comment>
<comment type="similarity">
    <text evidence="2">Belongs to the N(4)-acetylcytidine amidohydrolase family.</text>
</comment>
<sequence length="102" mass="11852">MNREITFFGRFEADILADRKTITIRDSSESDFRSGEVLRVCRNEDGVFFCHIKVKSVTPVTLDGLSERHAEQENMSLDELKKVIKAIYPGLDRFYVIEFTRC</sequence>
<feature type="chain" id="PRO_1000131801" description="N(4)-acetylcytidine amidohydrolase">
    <location>
        <begin position="1"/>
        <end position="102"/>
    </location>
</feature>
<feature type="domain" description="ASCH" evidence="1">
    <location>
        <begin position="6"/>
        <end position="92"/>
    </location>
</feature>
<feature type="active site" description="Proton acceptor" evidence="2">
    <location>
        <position position="20"/>
    </location>
</feature>
<feature type="active site" description="Nucleophile" evidence="2">
    <location>
        <position position="23"/>
    </location>
</feature>
<feature type="active site" description="Proton donor" evidence="2">
    <location>
        <position position="73"/>
    </location>
</feature>
<protein>
    <recommendedName>
        <fullName evidence="2">N(4)-acetylcytidine amidohydrolase</fullName>
        <shortName evidence="2">ac4C amidohydrolase</shortName>
        <ecNumber evidence="2">3.5.1.135</ecNumber>
    </recommendedName>
</protein>
<dbReference type="EC" id="3.5.1.135" evidence="2"/>
<dbReference type="EMBL" id="CP001048">
    <property type="protein sequence ID" value="ACC88745.1"/>
    <property type="molecule type" value="Genomic_DNA"/>
</dbReference>
<dbReference type="SMR" id="B2K0H6"/>
<dbReference type="KEGG" id="ypb:YPTS_1778"/>
<dbReference type="PATRIC" id="fig|502801.10.peg.1156"/>
<dbReference type="GO" id="GO:0005829">
    <property type="term" value="C:cytosol"/>
    <property type="evidence" value="ECO:0007669"/>
    <property type="project" value="TreeGrafter"/>
</dbReference>
<dbReference type="GO" id="GO:0016813">
    <property type="term" value="F:hydrolase activity, acting on carbon-nitrogen (but not peptide) bonds, in linear amidines"/>
    <property type="evidence" value="ECO:0007669"/>
    <property type="project" value="UniProtKB-UniRule"/>
</dbReference>
<dbReference type="GO" id="GO:0106251">
    <property type="term" value="F:N4-acetylcytidine amidohydrolase activity"/>
    <property type="evidence" value="ECO:0007669"/>
    <property type="project" value="RHEA"/>
</dbReference>
<dbReference type="CDD" id="cd06552">
    <property type="entry name" value="ASCH_yqfb_like"/>
    <property type="match status" value="1"/>
</dbReference>
<dbReference type="FunFam" id="2.30.130.30:FF:000001">
    <property type="entry name" value="UPF0267 protein YqfB"/>
    <property type="match status" value="1"/>
</dbReference>
<dbReference type="Gene3D" id="2.30.130.30">
    <property type="entry name" value="Hypothetical protein"/>
    <property type="match status" value="1"/>
</dbReference>
<dbReference type="HAMAP" id="MF_00684">
    <property type="entry name" value="ac4C_amidohydr"/>
    <property type="match status" value="1"/>
</dbReference>
<dbReference type="InterPro" id="IPR008314">
    <property type="entry name" value="AC4CH"/>
</dbReference>
<dbReference type="InterPro" id="IPR007374">
    <property type="entry name" value="ASCH_domain"/>
</dbReference>
<dbReference type="InterPro" id="IPR015947">
    <property type="entry name" value="PUA-like_sf"/>
</dbReference>
<dbReference type="NCBIfam" id="NF003443">
    <property type="entry name" value="PRK04980.1"/>
    <property type="match status" value="1"/>
</dbReference>
<dbReference type="PANTHER" id="PTHR38088">
    <property type="entry name" value="UCP029143 FAMILY PROTEIN"/>
    <property type="match status" value="1"/>
</dbReference>
<dbReference type="PANTHER" id="PTHR38088:SF2">
    <property type="entry name" value="UCP029143 FAMILY PROTEIN"/>
    <property type="match status" value="1"/>
</dbReference>
<dbReference type="Pfam" id="PF04266">
    <property type="entry name" value="ASCH"/>
    <property type="match status" value="1"/>
</dbReference>
<dbReference type="PIRSF" id="PIRSF029143">
    <property type="entry name" value="UCP029143"/>
    <property type="match status" value="1"/>
</dbReference>
<dbReference type="SMART" id="SM01022">
    <property type="entry name" value="ASCH"/>
    <property type="match status" value="1"/>
</dbReference>
<dbReference type="SUPFAM" id="SSF88697">
    <property type="entry name" value="PUA domain-like"/>
    <property type="match status" value="1"/>
</dbReference>
<gene>
    <name type="ordered locus">YPTS_1778</name>
</gene>
<accession>B2K0H6</accession>
<keyword id="KW-0378">Hydrolase</keyword>
<name>AC4CH_YERPB</name>